<feature type="chain" id="PRO_0000294028" description="RING finger protein 145">
    <location>
        <begin position="1"/>
        <end position="695"/>
    </location>
</feature>
<feature type="transmembrane region" description="Helical" evidence="1">
    <location>
        <begin position="53"/>
        <end position="73"/>
    </location>
</feature>
<feature type="transmembrane region" description="Helical" evidence="1">
    <location>
        <begin position="77"/>
        <end position="97"/>
    </location>
</feature>
<feature type="transmembrane region" description="Helical" evidence="1">
    <location>
        <begin position="123"/>
        <end position="143"/>
    </location>
</feature>
<feature type="transmembrane region" description="Helical" evidence="1">
    <location>
        <begin position="146"/>
        <end position="166"/>
    </location>
</feature>
<feature type="transmembrane region" description="Helical" evidence="1">
    <location>
        <begin position="168"/>
        <end position="188"/>
    </location>
</feature>
<feature type="transmembrane region" description="Helical" evidence="1">
    <location>
        <begin position="225"/>
        <end position="245"/>
    </location>
</feature>
<feature type="transmembrane region" description="Helical" evidence="1">
    <location>
        <begin position="275"/>
        <end position="295"/>
    </location>
</feature>
<feature type="transmembrane region" description="Helical" evidence="1">
    <location>
        <begin position="316"/>
        <end position="336"/>
    </location>
</feature>
<feature type="transmembrane region" description="Helical" evidence="1">
    <location>
        <begin position="340"/>
        <end position="360"/>
    </location>
</feature>
<feature type="transmembrane region" description="Helical" evidence="1">
    <location>
        <begin position="384"/>
        <end position="404"/>
    </location>
</feature>
<feature type="transmembrane region" description="Helical" evidence="1">
    <location>
        <begin position="410"/>
        <end position="430"/>
    </location>
</feature>
<feature type="transmembrane region" description="Helical" evidence="1">
    <location>
        <begin position="460"/>
        <end position="480"/>
    </location>
</feature>
<feature type="transmembrane region" description="Helical" evidence="1">
    <location>
        <begin position="482"/>
        <end position="502"/>
    </location>
</feature>
<feature type="zinc finger region" description="RING-type; atypical" evidence="2">
    <location>
        <begin position="537"/>
        <end position="575"/>
    </location>
</feature>
<feature type="region of interest" description="Disordered" evidence="3">
    <location>
        <begin position="585"/>
        <end position="610"/>
    </location>
</feature>
<feature type="compositionally biased region" description="Polar residues" evidence="3">
    <location>
        <begin position="585"/>
        <end position="603"/>
    </location>
</feature>
<sequence>MGAKEKLEAMLNVALRVPSIMLLDVLYRWDVSSFFKQIQRSSLNNNPLFQYKYLALNMHYVGYILSVVLLTLPRQHLAKLYLYFVAALLLYAGHQISRDYVRSELESGYEGPMHIEPLSMNRFITALVGQLVVCTLCSCVMKTKQIWLFSAHMLPLLARLCLVPIETIVVINKFAMIFTGLEVLYFLASNLLVPFNLAKSAYRELAQVVEVYGLLALGMSLWNQLVVPVLFMVFWLVLFALQIYTYFSTRDQPTSRERLLFLFLTSIAECCSTPYSLLGLVFTVSFVALGVLTLCKFYLQGYRAFMNDPAMNRGMTEGVTLLILAVQTGLIELQVVHRAFLLSIILFIVVASILQSMLEIADPIVLALGASRDKSLWKHFRAVSLCLFLLVFPSYMAYMICQFFHMDFWLLIIISSSILTSLQVLGTLFIYVLFMIEEFRKEPVENMDDVIYYVNGTYRLLEFLVALCVVAYGVSETVFGEWTVMGSMIIFIHSYYNVWLRAQLGWKSFLLRRDAVNKIKSLPVATKEQLEQHNDICSICYQDMNSAVITPCSHFFHPGCLKKWLYVQETCPLCHCQLKSLSQQATGESGSSTNPVSEQSATNPPLGPVSRAEVTTEPLAAVPTRSALEQEPTMDIKVSGSVEKRIGELEAHFSQGEANLNSNEVLQRLQAKGEANPEDLNVKALPPECEHCAEI</sequence>
<reference key="1">
    <citation type="submission" date="2006-08" db="EMBL/GenBank/DDBJ databases">
        <authorList>
            <consortium name="NIH - Xenopus Gene Collection (XGC) project"/>
        </authorList>
    </citation>
    <scope>NUCLEOTIDE SEQUENCE [LARGE SCALE MRNA]</scope>
    <source>
        <tissue>Brain</tissue>
    </source>
</reference>
<accession>Q0IJ20</accession>
<organism>
    <name type="scientific">Xenopus tropicalis</name>
    <name type="common">Western clawed frog</name>
    <name type="synonym">Silurana tropicalis</name>
    <dbReference type="NCBI Taxonomy" id="8364"/>
    <lineage>
        <taxon>Eukaryota</taxon>
        <taxon>Metazoa</taxon>
        <taxon>Chordata</taxon>
        <taxon>Craniata</taxon>
        <taxon>Vertebrata</taxon>
        <taxon>Euteleostomi</taxon>
        <taxon>Amphibia</taxon>
        <taxon>Batrachia</taxon>
        <taxon>Anura</taxon>
        <taxon>Pipoidea</taxon>
        <taxon>Pipidae</taxon>
        <taxon>Xenopodinae</taxon>
        <taxon>Xenopus</taxon>
        <taxon>Silurana</taxon>
    </lineage>
</organism>
<keyword id="KW-0472">Membrane</keyword>
<keyword id="KW-0479">Metal-binding</keyword>
<keyword id="KW-1185">Reference proteome</keyword>
<keyword id="KW-0812">Transmembrane</keyword>
<keyword id="KW-1133">Transmembrane helix</keyword>
<keyword id="KW-0862">Zinc</keyword>
<keyword id="KW-0863">Zinc-finger</keyword>
<protein>
    <recommendedName>
        <fullName>RING finger protein 145</fullName>
    </recommendedName>
</protein>
<dbReference type="EMBL" id="BC121248">
    <property type="protein sequence ID" value="AAI21249.1"/>
    <property type="molecule type" value="mRNA"/>
</dbReference>
<dbReference type="RefSeq" id="NP_001072260.1">
    <property type="nucleotide sequence ID" value="NM_001078792.1"/>
</dbReference>
<dbReference type="RefSeq" id="XP_012814664.1">
    <property type="nucleotide sequence ID" value="XM_012959210.3"/>
</dbReference>
<dbReference type="RefSeq" id="XP_012814666.1">
    <property type="nucleotide sequence ID" value="XM_012959212.3"/>
</dbReference>
<dbReference type="SMR" id="Q0IJ20"/>
<dbReference type="FunCoup" id="Q0IJ20">
    <property type="interactions" value="1278"/>
</dbReference>
<dbReference type="STRING" id="8364.ENSXETP00000006638"/>
<dbReference type="PaxDb" id="8364-ENSXETP00000035727"/>
<dbReference type="GeneID" id="779713"/>
<dbReference type="KEGG" id="xtr:779713"/>
<dbReference type="AGR" id="Xenbase:XB-GENE-979193"/>
<dbReference type="CTD" id="153830"/>
<dbReference type="Xenbase" id="XB-GENE-979193">
    <property type="gene designation" value="rnf145"/>
</dbReference>
<dbReference type="eggNOG" id="KOG0802">
    <property type="taxonomic scope" value="Eukaryota"/>
</dbReference>
<dbReference type="HOGENOM" id="CLU_016467_1_0_1"/>
<dbReference type="InParanoid" id="Q0IJ20"/>
<dbReference type="OMA" id="MHSAPLH"/>
<dbReference type="OrthoDB" id="4752984at2759"/>
<dbReference type="PhylomeDB" id="Q0IJ20"/>
<dbReference type="TreeFam" id="TF318635"/>
<dbReference type="Proteomes" id="UP000008143">
    <property type="component" value="Chromosome 3"/>
</dbReference>
<dbReference type="Bgee" id="ENSXETG00000016361">
    <property type="expression patterns" value="Expressed in 4-cell stage embryo and 12 other cell types or tissues"/>
</dbReference>
<dbReference type="ExpressionAtlas" id="Q0IJ20">
    <property type="expression patterns" value="baseline"/>
</dbReference>
<dbReference type="GO" id="GO:0016020">
    <property type="term" value="C:membrane"/>
    <property type="evidence" value="ECO:0007669"/>
    <property type="project" value="UniProtKB-SubCell"/>
</dbReference>
<dbReference type="GO" id="GO:0008270">
    <property type="term" value="F:zinc ion binding"/>
    <property type="evidence" value="ECO:0007669"/>
    <property type="project" value="UniProtKB-KW"/>
</dbReference>
<dbReference type="CDD" id="cd16684">
    <property type="entry name" value="RING-H2_RNF145"/>
    <property type="match status" value="1"/>
</dbReference>
<dbReference type="FunFam" id="3.30.40.10:FF:000145">
    <property type="entry name" value="RING finger protein 145"/>
    <property type="match status" value="1"/>
</dbReference>
<dbReference type="Gene3D" id="3.30.40.10">
    <property type="entry name" value="Zinc/RING finger domain, C3HC4 (zinc finger)"/>
    <property type="match status" value="1"/>
</dbReference>
<dbReference type="InterPro" id="IPR050731">
    <property type="entry name" value="HRD1_E3_ubiq-ligases"/>
</dbReference>
<dbReference type="InterPro" id="IPR047823">
    <property type="entry name" value="RNF145_RING-H2"/>
</dbReference>
<dbReference type="InterPro" id="IPR025754">
    <property type="entry name" value="TRC8_N_dom"/>
</dbReference>
<dbReference type="InterPro" id="IPR001841">
    <property type="entry name" value="Znf_RING"/>
</dbReference>
<dbReference type="InterPro" id="IPR011016">
    <property type="entry name" value="Znf_RING-CH"/>
</dbReference>
<dbReference type="InterPro" id="IPR013083">
    <property type="entry name" value="Znf_RING/FYVE/PHD"/>
</dbReference>
<dbReference type="PANTHER" id="PTHR22763:SF167">
    <property type="entry name" value="RING FINGER PROTEIN 145"/>
    <property type="match status" value="1"/>
</dbReference>
<dbReference type="PANTHER" id="PTHR22763">
    <property type="entry name" value="RING ZINC FINGER PROTEIN"/>
    <property type="match status" value="1"/>
</dbReference>
<dbReference type="Pfam" id="PF13705">
    <property type="entry name" value="TRC8_N"/>
    <property type="match status" value="1"/>
</dbReference>
<dbReference type="Pfam" id="PF13639">
    <property type="entry name" value="zf-RING_2"/>
    <property type="match status" value="1"/>
</dbReference>
<dbReference type="SMART" id="SM00184">
    <property type="entry name" value="RING"/>
    <property type="match status" value="1"/>
</dbReference>
<dbReference type="SMART" id="SM00744">
    <property type="entry name" value="RINGv"/>
    <property type="match status" value="1"/>
</dbReference>
<dbReference type="SUPFAM" id="SSF57850">
    <property type="entry name" value="RING/U-box"/>
    <property type="match status" value="1"/>
</dbReference>
<dbReference type="PROSITE" id="PS50089">
    <property type="entry name" value="ZF_RING_2"/>
    <property type="match status" value="1"/>
</dbReference>
<evidence type="ECO:0000255" key="1"/>
<evidence type="ECO:0000255" key="2">
    <source>
        <dbReference type="PROSITE-ProRule" id="PRU00175"/>
    </source>
</evidence>
<evidence type="ECO:0000256" key="3">
    <source>
        <dbReference type="SAM" id="MobiDB-lite"/>
    </source>
</evidence>
<evidence type="ECO:0000305" key="4"/>
<comment type="subcellular location">
    <subcellularLocation>
        <location evidence="4">Membrane</location>
        <topology evidence="4">Multi-pass membrane protein</topology>
    </subcellularLocation>
</comment>
<gene>
    <name type="primary">rnf145</name>
</gene>
<name>RN145_XENTR</name>
<proteinExistence type="evidence at transcript level"/>